<protein>
    <recommendedName>
        <fullName evidence="1">dCTP deaminase, dUMP-forming</fullName>
        <ecNumber evidence="1">3.5.4.30</ecNumber>
    </recommendedName>
    <alternativeName>
        <fullName evidence="1">Bifunctional dCTP deaminase:dUTPase</fullName>
    </alternativeName>
    <alternativeName>
        <fullName evidence="1">DCD-DUT</fullName>
    </alternativeName>
</protein>
<name>DCDB_STRAW</name>
<proteinExistence type="inferred from homology"/>
<sequence>MLLSDKDIRAEIDAGRVRIDPYDESMVQPSSIDVRLDRYFRVFENHRYPHIDPSVEQADLTRLVEPEGDEPFILHPGEFVLASTYEVISLPDDLASRLEGKSSLGRLGLVTHSTAGFIDPGFSGHVTLELSNLATLPIKLWPGMKIGQLCMFRLSSPAEFPYGSDRYGSRYQGQRGPTASRSFLNFHRTQV</sequence>
<gene>
    <name evidence="1" type="primary">dcd</name>
    <name type="ordered locus">SAV_4464</name>
</gene>
<feature type="chain" id="PRO_0000156014" description="dCTP deaminase, dUMP-forming">
    <location>
        <begin position="1"/>
        <end position="191"/>
    </location>
</feature>
<feature type="active site" description="Proton donor/acceptor" evidence="1">
    <location>
        <position position="129"/>
    </location>
</feature>
<feature type="binding site" evidence="1">
    <location>
        <begin position="101"/>
        <end position="106"/>
    </location>
    <ligand>
        <name>dCTP</name>
        <dbReference type="ChEBI" id="CHEBI:61481"/>
    </ligand>
</feature>
<feature type="binding site" evidence="1">
    <location>
        <position position="119"/>
    </location>
    <ligand>
        <name>dCTP</name>
        <dbReference type="ChEBI" id="CHEBI:61481"/>
    </ligand>
</feature>
<feature type="binding site" evidence="1">
    <location>
        <begin position="127"/>
        <end position="129"/>
    </location>
    <ligand>
        <name>dCTP</name>
        <dbReference type="ChEBI" id="CHEBI:61481"/>
    </ligand>
</feature>
<feature type="binding site" evidence="1">
    <location>
        <position position="148"/>
    </location>
    <ligand>
        <name>dCTP</name>
        <dbReference type="ChEBI" id="CHEBI:61481"/>
    </ligand>
</feature>
<feature type="binding site" evidence="1">
    <location>
        <position position="162"/>
    </location>
    <ligand>
        <name>dCTP</name>
        <dbReference type="ChEBI" id="CHEBI:61481"/>
    </ligand>
</feature>
<feature type="binding site" evidence="1">
    <location>
        <position position="174"/>
    </location>
    <ligand>
        <name>dCTP</name>
        <dbReference type="ChEBI" id="CHEBI:61481"/>
    </ligand>
</feature>
<feature type="site" description="Important for bifunctional activity" evidence="1">
    <location>
        <begin position="116"/>
        <end position="117"/>
    </location>
</feature>
<evidence type="ECO:0000255" key="1">
    <source>
        <dbReference type="HAMAP-Rule" id="MF_00146"/>
    </source>
</evidence>
<dbReference type="EC" id="3.5.4.30" evidence="1"/>
<dbReference type="EMBL" id="BA000030">
    <property type="protein sequence ID" value="BAC72176.1"/>
    <property type="molecule type" value="Genomic_DNA"/>
</dbReference>
<dbReference type="RefSeq" id="WP_010985889.1">
    <property type="nucleotide sequence ID" value="NZ_JZJK01000062.1"/>
</dbReference>
<dbReference type="SMR" id="Q82EZ9"/>
<dbReference type="GeneID" id="41541543"/>
<dbReference type="KEGG" id="sma:SAVERM_4464"/>
<dbReference type="eggNOG" id="COG0717">
    <property type="taxonomic scope" value="Bacteria"/>
</dbReference>
<dbReference type="HOGENOM" id="CLU_087476_2_0_11"/>
<dbReference type="OrthoDB" id="9780956at2"/>
<dbReference type="UniPathway" id="UPA00610">
    <property type="reaction ID" value="UER00667"/>
</dbReference>
<dbReference type="Proteomes" id="UP000000428">
    <property type="component" value="Chromosome"/>
</dbReference>
<dbReference type="GO" id="GO:0033973">
    <property type="term" value="F:dCTP deaminase (dUMP-forming) activity"/>
    <property type="evidence" value="ECO:0007669"/>
    <property type="project" value="UniProtKB-UniRule"/>
</dbReference>
<dbReference type="GO" id="GO:0008829">
    <property type="term" value="F:dCTP deaminase activity"/>
    <property type="evidence" value="ECO:0007669"/>
    <property type="project" value="InterPro"/>
</dbReference>
<dbReference type="GO" id="GO:0000166">
    <property type="term" value="F:nucleotide binding"/>
    <property type="evidence" value="ECO:0007669"/>
    <property type="project" value="UniProtKB-KW"/>
</dbReference>
<dbReference type="GO" id="GO:0006226">
    <property type="term" value="P:dUMP biosynthetic process"/>
    <property type="evidence" value="ECO:0007669"/>
    <property type="project" value="UniProtKB-UniRule"/>
</dbReference>
<dbReference type="GO" id="GO:0006229">
    <property type="term" value="P:dUTP biosynthetic process"/>
    <property type="evidence" value="ECO:0007669"/>
    <property type="project" value="InterPro"/>
</dbReference>
<dbReference type="GO" id="GO:0015949">
    <property type="term" value="P:nucleobase-containing small molecule interconversion"/>
    <property type="evidence" value="ECO:0007669"/>
    <property type="project" value="TreeGrafter"/>
</dbReference>
<dbReference type="CDD" id="cd07557">
    <property type="entry name" value="trimeric_dUTPase"/>
    <property type="match status" value="1"/>
</dbReference>
<dbReference type="FunFam" id="2.70.40.10:FF:000005">
    <property type="entry name" value="dCTP deaminase, dUMP-forming"/>
    <property type="match status" value="1"/>
</dbReference>
<dbReference type="Gene3D" id="2.70.40.10">
    <property type="match status" value="1"/>
</dbReference>
<dbReference type="HAMAP" id="MF_00146">
    <property type="entry name" value="dCTP_deaminase"/>
    <property type="match status" value="1"/>
</dbReference>
<dbReference type="InterPro" id="IPR011962">
    <property type="entry name" value="dCTP_deaminase"/>
</dbReference>
<dbReference type="InterPro" id="IPR036157">
    <property type="entry name" value="dUTPase-like_sf"/>
</dbReference>
<dbReference type="InterPro" id="IPR033704">
    <property type="entry name" value="dUTPase_trimeric"/>
</dbReference>
<dbReference type="NCBIfam" id="TIGR02274">
    <property type="entry name" value="dCTP_deam"/>
    <property type="match status" value="1"/>
</dbReference>
<dbReference type="PANTHER" id="PTHR42680">
    <property type="entry name" value="DCTP DEAMINASE"/>
    <property type="match status" value="1"/>
</dbReference>
<dbReference type="PANTHER" id="PTHR42680:SF3">
    <property type="entry name" value="DCTP DEAMINASE"/>
    <property type="match status" value="1"/>
</dbReference>
<dbReference type="Pfam" id="PF22769">
    <property type="entry name" value="DCD"/>
    <property type="match status" value="1"/>
</dbReference>
<dbReference type="SUPFAM" id="SSF51283">
    <property type="entry name" value="dUTPase-like"/>
    <property type="match status" value="1"/>
</dbReference>
<keyword id="KW-0378">Hydrolase</keyword>
<keyword id="KW-0546">Nucleotide metabolism</keyword>
<keyword id="KW-0547">Nucleotide-binding</keyword>
<keyword id="KW-1185">Reference proteome</keyword>
<accession>Q82EZ9</accession>
<organism>
    <name type="scientific">Streptomyces avermitilis (strain ATCC 31267 / DSM 46492 / JCM 5070 / NBRC 14893 / NCIMB 12804 / NRRL 8165 / MA-4680)</name>
    <dbReference type="NCBI Taxonomy" id="227882"/>
    <lineage>
        <taxon>Bacteria</taxon>
        <taxon>Bacillati</taxon>
        <taxon>Actinomycetota</taxon>
        <taxon>Actinomycetes</taxon>
        <taxon>Kitasatosporales</taxon>
        <taxon>Streptomycetaceae</taxon>
        <taxon>Streptomyces</taxon>
    </lineage>
</organism>
<reference key="1">
    <citation type="journal article" date="2001" name="Proc. Natl. Acad. Sci. U.S.A.">
        <title>Genome sequence of an industrial microorganism Streptomyces avermitilis: deducing the ability of producing secondary metabolites.</title>
        <authorList>
            <person name="Omura S."/>
            <person name="Ikeda H."/>
            <person name="Ishikawa J."/>
            <person name="Hanamoto A."/>
            <person name="Takahashi C."/>
            <person name="Shinose M."/>
            <person name="Takahashi Y."/>
            <person name="Horikawa H."/>
            <person name="Nakazawa H."/>
            <person name="Osonoe T."/>
            <person name="Kikuchi H."/>
            <person name="Shiba T."/>
            <person name="Sakaki Y."/>
            <person name="Hattori M."/>
        </authorList>
    </citation>
    <scope>NUCLEOTIDE SEQUENCE [LARGE SCALE GENOMIC DNA]</scope>
    <source>
        <strain>ATCC 31267 / DSM 46492 / JCM 5070 / NBRC 14893 / NCIMB 12804 / NRRL 8165 / MA-4680</strain>
    </source>
</reference>
<reference key="2">
    <citation type="journal article" date="2003" name="Nat. Biotechnol.">
        <title>Complete genome sequence and comparative analysis of the industrial microorganism Streptomyces avermitilis.</title>
        <authorList>
            <person name="Ikeda H."/>
            <person name="Ishikawa J."/>
            <person name="Hanamoto A."/>
            <person name="Shinose M."/>
            <person name="Kikuchi H."/>
            <person name="Shiba T."/>
            <person name="Sakaki Y."/>
            <person name="Hattori M."/>
            <person name="Omura S."/>
        </authorList>
    </citation>
    <scope>NUCLEOTIDE SEQUENCE [LARGE SCALE GENOMIC DNA]</scope>
    <source>
        <strain>ATCC 31267 / DSM 46492 / JCM 5070 / NBRC 14893 / NCIMB 12804 / NRRL 8165 / MA-4680</strain>
    </source>
</reference>
<comment type="function">
    <text evidence="1">Bifunctional enzyme that catalyzes both the deamination of dCTP to dUTP and the hydrolysis of dUTP to dUMP without releasing the toxic dUTP intermediate.</text>
</comment>
<comment type="catalytic activity">
    <reaction evidence="1">
        <text>dCTP + 2 H2O = dUMP + NH4(+) + diphosphate</text>
        <dbReference type="Rhea" id="RHEA:19205"/>
        <dbReference type="ChEBI" id="CHEBI:15377"/>
        <dbReference type="ChEBI" id="CHEBI:28938"/>
        <dbReference type="ChEBI" id="CHEBI:33019"/>
        <dbReference type="ChEBI" id="CHEBI:61481"/>
        <dbReference type="ChEBI" id="CHEBI:246422"/>
        <dbReference type="EC" id="3.5.4.30"/>
    </reaction>
</comment>
<comment type="pathway">
    <text evidence="1">Pyrimidine metabolism; dUMP biosynthesis; dUMP from dCTP: step 1/1.</text>
</comment>
<comment type="subunit">
    <text evidence="1">Homotrimer.</text>
</comment>
<comment type="similarity">
    <text evidence="1">Belongs to the dCTP deaminase family.</text>
</comment>